<dbReference type="EC" id="2.7.7.6" evidence="1"/>
<dbReference type="EMBL" id="CP001407">
    <property type="protein sequence ID" value="ACO29577.1"/>
    <property type="molecule type" value="Genomic_DNA"/>
</dbReference>
<dbReference type="RefSeq" id="WP_000576443.1">
    <property type="nucleotide sequence ID" value="NZ_CP009318.1"/>
</dbReference>
<dbReference type="SMR" id="C1EPZ0"/>
<dbReference type="KEGG" id="bcx:BCA_4081"/>
<dbReference type="PATRIC" id="fig|572264.18.peg.4034"/>
<dbReference type="Proteomes" id="UP000002210">
    <property type="component" value="Chromosome"/>
</dbReference>
<dbReference type="GO" id="GO:0000428">
    <property type="term" value="C:DNA-directed RNA polymerase complex"/>
    <property type="evidence" value="ECO:0007669"/>
    <property type="project" value="UniProtKB-KW"/>
</dbReference>
<dbReference type="GO" id="GO:0003677">
    <property type="term" value="F:DNA binding"/>
    <property type="evidence" value="ECO:0007669"/>
    <property type="project" value="UniProtKB-UniRule"/>
</dbReference>
<dbReference type="GO" id="GO:0003899">
    <property type="term" value="F:DNA-directed RNA polymerase activity"/>
    <property type="evidence" value="ECO:0007669"/>
    <property type="project" value="UniProtKB-UniRule"/>
</dbReference>
<dbReference type="GO" id="GO:0006351">
    <property type="term" value="P:DNA-templated transcription"/>
    <property type="evidence" value="ECO:0007669"/>
    <property type="project" value="UniProtKB-UniRule"/>
</dbReference>
<dbReference type="Gene3D" id="3.10.20.730">
    <property type="entry name" value="RNAP, epsilon subunit-like"/>
    <property type="match status" value="1"/>
</dbReference>
<dbReference type="HAMAP" id="MF_01553">
    <property type="entry name" value="RNApol_bact_RpoY"/>
    <property type="match status" value="1"/>
</dbReference>
<dbReference type="InterPro" id="IPR009907">
    <property type="entry name" value="RpoY"/>
</dbReference>
<dbReference type="NCBIfam" id="NF010188">
    <property type="entry name" value="PRK13667.1"/>
    <property type="match status" value="1"/>
</dbReference>
<dbReference type="Pfam" id="PF07288">
    <property type="entry name" value="RpoY"/>
    <property type="match status" value="1"/>
</dbReference>
<evidence type="ECO:0000255" key="1">
    <source>
        <dbReference type="HAMAP-Rule" id="MF_01553"/>
    </source>
</evidence>
<feature type="chain" id="PRO_1000185332" description="DNA-directed RNA polymerase subunit epsilon">
    <location>
        <begin position="1"/>
        <end position="70"/>
    </location>
</feature>
<keyword id="KW-0240">DNA-directed RNA polymerase</keyword>
<keyword id="KW-0548">Nucleotidyltransferase</keyword>
<keyword id="KW-0804">Transcription</keyword>
<keyword id="KW-0808">Transferase</keyword>
<gene>
    <name evidence="1" type="primary">rpoY</name>
    <name type="ordered locus">BCA_4081</name>
</gene>
<sequence>MIFKVFYQEKMTEVPVRENTKVLYLEATSEKDVRTKLNKFAYNIEFVQSVTGNHLEYEKANADLTLAEIV</sequence>
<organism>
    <name type="scientific">Bacillus cereus (strain 03BB102)</name>
    <dbReference type="NCBI Taxonomy" id="572264"/>
    <lineage>
        <taxon>Bacteria</taxon>
        <taxon>Bacillati</taxon>
        <taxon>Bacillota</taxon>
        <taxon>Bacilli</taxon>
        <taxon>Bacillales</taxon>
        <taxon>Bacillaceae</taxon>
        <taxon>Bacillus</taxon>
        <taxon>Bacillus cereus group</taxon>
    </lineage>
</organism>
<reference key="1">
    <citation type="submission" date="2009-02" db="EMBL/GenBank/DDBJ databases">
        <title>Genome sequence of Bacillus cereus 03BB102.</title>
        <authorList>
            <person name="Dodson R.J."/>
            <person name="Jackson P."/>
            <person name="Munk A.C."/>
            <person name="Brettin T."/>
            <person name="Bruce D."/>
            <person name="Detter C."/>
            <person name="Tapia R."/>
            <person name="Han C."/>
            <person name="Sutton G."/>
            <person name="Sims D."/>
        </authorList>
    </citation>
    <scope>NUCLEOTIDE SEQUENCE [LARGE SCALE GENOMIC DNA]</scope>
    <source>
        <strain>03BB102</strain>
    </source>
</reference>
<name>RPOY_BACC3</name>
<protein>
    <recommendedName>
        <fullName evidence="1">DNA-directed RNA polymerase subunit epsilon</fullName>
        <shortName evidence="1">RNAP epsilon subunit</shortName>
        <ecNumber evidence="1">2.7.7.6</ecNumber>
    </recommendedName>
    <alternativeName>
        <fullName evidence="1">RNA polymerase epsilon subunit</fullName>
    </alternativeName>
    <alternativeName>
        <fullName evidence="1">Transcriptase subunit epsilon</fullName>
    </alternativeName>
</protein>
<accession>C1EPZ0</accession>
<comment type="function">
    <text evidence="1">A non-essential component of RNA polymerase (RNAP).</text>
</comment>
<comment type="catalytic activity">
    <reaction evidence="1">
        <text>RNA(n) + a ribonucleoside 5'-triphosphate = RNA(n+1) + diphosphate</text>
        <dbReference type="Rhea" id="RHEA:21248"/>
        <dbReference type="Rhea" id="RHEA-COMP:14527"/>
        <dbReference type="Rhea" id="RHEA-COMP:17342"/>
        <dbReference type="ChEBI" id="CHEBI:33019"/>
        <dbReference type="ChEBI" id="CHEBI:61557"/>
        <dbReference type="ChEBI" id="CHEBI:140395"/>
        <dbReference type="EC" id="2.7.7.6"/>
    </reaction>
</comment>
<comment type="subunit">
    <text evidence="1">RNAP is composed of a core of 2 alpha, a beta and a beta' subunit. The core is associated with a delta subunit, and at least one of epsilon or omega. When a sigma factor is associated with the core the holoenzyme is formed, which can initiate transcription.</text>
</comment>
<comment type="similarity">
    <text evidence="1">Belongs to the RNA polymerase subunit epsilon family.</text>
</comment>
<proteinExistence type="inferred from homology"/>